<accession>Q9B1K8</accession>
<proteinExistence type="inferred from homology"/>
<geneLocation type="chloroplast"/>
<feature type="chain" id="PRO_0000129452" description="Large ribosomal subunit protein uL23cz/uL23cy">
    <location>
        <begin position="1"/>
        <end position="93"/>
    </location>
</feature>
<gene>
    <name type="primary">rpl23-A</name>
</gene>
<gene>
    <name type="primary">rpl23-B</name>
</gene>
<sequence length="93" mass="10816">MNGIKYAVFTDKSIRLLGKNQYTSNVESGSTRTEIKHWVELFFGVKVKAMNSHRLPAKGRKVRLIMGHTMHYRRMIITLQPGYSIPPLRKKRT</sequence>
<organism>
    <name type="scientific">Lotus japonicus</name>
    <name type="common">Lotus corniculatus var. japonicus</name>
    <dbReference type="NCBI Taxonomy" id="34305"/>
    <lineage>
        <taxon>Eukaryota</taxon>
        <taxon>Viridiplantae</taxon>
        <taxon>Streptophyta</taxon>
        <taxon>Embryophyta</taxon>
        <taxon>Tracheophyta</taxon>
        <taxon>Spermatophyta</taxon>
        <taxon>Magnoliopsida</taxon>
        <taxon>eudicotyledons</taxon>
        <taxon>Gunneridae</taxon>
        <taxon>Pentapetalae</taxon>
        <taxon>rosids</taxon>
        <taxon>fabids</taxon>
        <taxon>Fabales</taxon>
        <taxon>Fabaceae</taxon>
        <taxon>Papilionoideae</taxon>
        <taxon>50 kb inversion clade</taxon>
        <taxon>NPAAA clade</taxon>
        <taxon>Hologalegina</taxon>
        <taxon>robinioid clade</taxon>
        <taxon>Loteae</taxon>
        <taxon>Lotus</taxon>
    </lineage>
</organism>
<protein>
    <recommendedName>
        <fullName evidence="2">Large ribosomal subunit protein uL23cz/uL23cy</fullName>
    </recommendedName>
    <alternativeName>
        <fullName>50S ribosomal protein L23, chloroplastic</fullName>
    </alternativeName>
</protein>
<comment type="function">
    <text evidence="1">Binds to 23S rRNA.</text>
</comment>
<comment type="subunit">
    <text evidence="1">Part of the 50S ribosomal subunit.</text>
</comment>
<comment type="subcellular location">
    <subcellularLocation>
        <location>Plastid</location>
        <location>Chloroplast</location>
    </subcellularLocation>
</comment>
<comment type="similarity">
    <text evidence="2">Belongs to the universal ribosomal protein uL23 family.</text>
</comment>
<evidence type="ECO:0000250" key="1"/>
<evidence type="ECO:0000305" key="2"/>
<dbReference type="EMBL" id="AP002983">
    <property type="protein sequence ID" value="BAB33237.1"/>
    <property type="molecule type" value="Genomic_DNA"/>
</dbReference>
<dbReference type="EMBL" id="AP002983">
    <property type="protein sequence ID" value="BAB33257.1"/>
    <property type="molecule type" value="Genomic_DNA"/>
</dbReference>
<dbReference type="SMR" id="Q9B1K8"/>
<dbReference type="GO" id="GO:0009507">
    <property type="term" value="C:chloroplast"/>
    <property type="evidence" value="ECO:0007669"/>
    <property type="project" value="UniProtKB-SubCell"/>
</dbReference>
<dbReference type="GO" id="GO:1990904">
    <property type="term" value="C:ribonucleoprotein complex"/>
    <property type="evidence" value="ECO:0007669"/>
    <property type="project" value="UniProtKB-KW"/>
</dbReference>
<dbReference type="GO" id="GO:0005840">
    <property type="term" value="C:ribosome"/>
    <property type="evidence" value="ECO:0007669"/>
    <property type="project" value="UniProtKB-KW"/>
</dbReference>
<dbReference type="GO" id="GO:0003729">
    <property type="term" value="F:mRNA binding"/>
    <property type="evidence" value="ECO:0007669"/>
    <property type="project" value="UniProtKB-ARBA"/>
</dbReference>
<dbReference type="GO" id="GO:0019843">
    <property type="term" value="F:rRNA binding"/>
    <property type="evidence" value="ECO:0007669"/>
    <property type="project" value="UniProtKB-UniRule"/>
</dbReference>
<dbReference type="GO" id="GO:0003735">
    <property type="term" value="F:structural constituent of ribosome"/>
    <property type="evidence" value="ECO:0007669"/>
    <property type="project" value="InterPro"/>
</dbReference>
<dbReference type="GO" id="GO:0006412">
    <property type="term" value="P:translation"/>
    <property type="evidence" value="ECO:0007669"/>
    <property type="project" value="UniProtKB-UniRule"/>
</dbReference>
<dbReference type="FunFam" id="3.30.70.330:FF:000002">
    <property type="entry name" value="50S ribosomal protein L23, chloroplastic"/>
    <property type="match status" value="1"/>
</dbReference>
<dbReference type="Gene3D" id="3.30.70.330">
    <property type="match status" value="1"/>
</dbReference>
<dbReference type="HAMAP" id="MF_01369_B">
    <property type="entry name" value="Ribosomal_uL23_B"/>
    <property type="match status" value="1"/>
</dbReference>
<dbReference type="InterPro" id="IPR012677">
    <property type="entry name" value="Nucleotide-bd_a/b_plait_sf"/>
</dbReference>
<dbReference type="InterPro" id="IPR013025">
    <property type="entry name" value="Ribosomal_uL23-like"/>
</dbReference>
<dbReference type="InterPro" id="IPR012678">
    <property type="entry name" value="Ribosomal_uL23/eL15/eS24_sf"/>
</dbReference>
<dbReference type="InterPro" id="IPR001014">
    <property type="entry name" value="Ribosomal_uL23_CS"/>
</dbReference>
<dbReference type="PANTHER" id="PTHR11620">
    <property type="entry name" value="60S RIBOSOMAL PROTEIN L23A"/>
    <property type="match status" value="1"/>
</dbReference>
<dbReference type="Pfam" id="PF00276">
    <property type="entry name" value="Ribosomal_L23"/>
    <property type="match status" value="1"/>
</dbReference>
<dbReference type="SUPFAM" id="SSF54189">
    <property type="entry name" value="Ribosomal proteins S24e, L23 and L15e"/>
    <property type="match status" value="1"/>
</dbReference>
<dbReference type="PROSITE" id="PS00050">
    <property type="entry name" value="RIBOSOMAL_L23"/>
    <property type="match status" value="1"/>
</dbReference>
<keyword id="KW-0150">Chloroplast</keyword>
<keyword id="KW-0934">Plastid</keyword>
<keyword id="KW-0687">Ribonucleoprotein</keyword>
<keyword id="KW-0689">Ribosomal protein</keyword>
<keyword id="KW-0694">RNA-binding</keyword>
<keyword id="KW-0699">rRNA-binding</keyword>
<name>RK23_LOTJA</name>
<reference key="1">
    <citation type="journal article" date="2000" name="DNA Res.">
        <title>Complete structure of the chloroplast genome of a legume, Lotus japonicus.</title>
        <authorList>
            <person name="Kato T."/>
            <person name="Kaneko T."/>
            <person name="Sato S."/>
            <person name="Nakamura Y."/>
            <person name="Tabata S."/>
        </authorList>
    </citation>
    <scope>NUCLEOTIDE SEQUENCE [LARGE SCALE GENOMIC DNA]</scope>
    <source>
        <strain>cv. Miyakojima MG-20</strain>
    </source>
</reference>